<gene>
    <name evidence="1" type="primary">nadK</name>
    <name type="ordered locus">NWMN_0877</name>
</gene>
<protein>
    <recommendedName>
        <fullName evidence="1">NAD kinase</fullName>
        <ecNumber evidence="1">2.7.1.23</ecNumber>
    </recommendedName>
    <alternativeName>
        <fullName evidence="1">ATP-dependent NAD kinase</fullName>
    </alternativeName>
</protein>
<proteinExistence type="inferred from homology"/>
<accession>A6QFL7</accession>
<evidence type="ECO:0000255" key="1">
    <source>
        <dbReference type="HAMAP-Rule" id="MF_00361"/>
    </source>
</evidence>
<organism>
    <name type="scientific">Staphylococcus aureus (strain Newman)</name>
    <dbReference type="NCBI Taxonomy" id="426430"/>
    <lineage>
        <taxon>Bacteria</taxon>
        <taxon>Bacillati</taxon>
        <taxon>Bacillota</taxon>
        <taxon>Bacilli</taxon>
        <taxon>Bacillales</taxon>
        <taxon>Staphylococcaceae</taxon>
        <taxon>Staphylococcus</taxon>
    </lineage>
</organism>
<keyword id="KW-0067">ATP-binding</keyword>
<keyword id="KW-0963">Cytoplasm</keyword>
<keyword id="KW-0418">Kinase</keyword>
<keyword id="KW-0520">NAD</keyword>
<keyword id="KW-0521">NADP</keyword>
<keyword id="KW-0547">Nucleotide-binding</keyword>
<keyword id="KW-0808">Transferase</keyword>
<feature type="chain" id="PRO_1000072086" description="NAD kinase">
    <location>
        <begin position="1"/>
        <end position="269"/>
    </location>
</feature>
<feature type="active site" description="Proton acceptor" evidence="1">
    <location>
        <position position="45"/>
    </location>
</feature>
<feature type="binding site" evidence="1">
    <location>
        <begin position="45"/>
        <end position="46"/>
    </location>
    <ligand>
        <name>NAD(+)</name>
        <dbReference type="ChEBI" id="CHEBI:57540"/>
    </ligand>
</feature>
<feature type="binding site" evidence="1">
    <location>
        <begin position="122"/>
        <end position="123"/>
    </location>
    <ligand>
        <name>NAD(+)</name>
        <dbReference type="ChEBI" id="CHEBI:57540"/>
    </ligand>
</feature>
<feature type="binding site" evidence="1">
    <location>
        <position position="149"/>
    </location>
    <ligand>
        <name>NAD(+)</name>
        <dbReference type="ChEBI" id="CHEBI:57540"/>
    </ligand>
</feature>
<feature type="binding site" evidence="1">
    <location>
        <position position="151"/>
    </location>
    <ligand>
        <name>NAD(+)</name>
        <dbReference type="ChEBI" id="CHEBI:57540"/>
    </ligand>
</feature>
<feature type="binding site" evidence="1">
    <location>
        <position position="186"/>
    </location>
    <ligand>
        <name>NAD(+)</name>
        <dbReference type="ChEBI" id="CHEBI:57540"/>
    </ligand>
</feature>
<dbReference type="EC" id="2.7.1.23" evidence="1"/>
<dbReference type="EMBL" id="AP009351">
    <property type="protein sequence ID" value="BAF67149.1"/>
    <property type="molecule type" value="Genomic_DNA"/>
</dbReference>
<dbReference type="RefSeq" id="WP_001270834.1">
    <property type="nucleotide sequence ID" value="NZ_JBBIAE010000002.1"/>
</dbReference>
<dbReference type="SMR" id="A6QFL7"/>
<dbReference type="KEGG" id="sae:NWMN_0877"/>
<dbReference type="HOGENOM" id="CLU_008831_0_3_9"/>
<dbReference type="Proteomes" id="UP000006386">
    <property type="component" value="Chromosome"/>
</dbReference>
<dbReference type="GO" id="GO:0005737">
    <property type="term" value="C:cytoplasm"/>
    <property type="evidence" value="ECO:0007669"/>
    <property type="project" value="UniProtKB-SubCell"/>
</dbReference>
<dbReference type="GO" id="GO:0005524">
    <property type="term" value="F:ATP binding"/>
    <property type="evidence" value="ECO:0007669"/>
    <property type="project" value="UniProtKB-KW"/>
</dbReference>
<dbReference type="GO" id="GO:0046872">
    <property type="term" value="F:metal ion binding"/>
    <property type="evidence" value="ECO:0007669"/>
    <property type="project" value="UniProtKB-UniRule"/>
</dbReference>
<dbReference type="GO" id="GO:0051287">
    <property type="term" value="F:NAD binding"/>
    <property type="evidence" value="ECO:0007669"/>
    <property type="project" value="UniProtKB-ARBA"/>
</dbReference>
<dbReference type="GO" id="GO:0003951">
    <property type="term" value="F:NAD+ kinase activity"/>
    <property type="evidence" value="ECO:0007669"/>
    <property type="project" value="UniProtKB-UniRule"/>
</dbReference>
<dbReference type="GO" id="GO:0019674">
    <property type="term" value="P:NAD metabolic process"/>
    <property type="evidence" value="ECO:0007669"/>
    <property type="project" value="InterPro"/>
</dbReference>
<dbReference type="GO" id="GO:0006741">
    <property type="term" value="P:NADP biosynthetic process"/>
    <property type="evidence" value="ECO:0007669"/>
    <property type="project" value="UniProtKB-UniRule"/>
</dbReference>
<dbReference type="FunFam" id="2.60.200.30:FF:000002">
    <property type="entry name" value="NAD kinase"/>
    <property type="match status" value="1"/>
</dbReference>
<dbReference type="Gene3D" id="3.40.50.10330">
    <property type="entry name" value="Probable inorganic polyphosphate/atp-NAD kinase, domain 1"/>
    <property type="match status" value="1"/>
</dbReference>
<dbReference type="Gene3D" id="2.60.200.30">
    <property type="entry name" value="Probable inorganic polyphosphate/atp-NAD kinase, domain 2"/>
    <property type="match status" value="1"/>
</dbReference>
<dbReference type="HAMAP" id="MF_00361">
    <property type="entry name" value="NAD_kinase"/>
    <property type="match status" value="1"/>
</dbReference>
<dbReference type="InterPro" id="IPR017438">
    <property type="entry name" value="ATP-NAD_kinase_N"/>
</dbReference>
<dbReference type="InterPro" id="IPR017437">
    <property type="entry name" value="ATP-NAD_kinase_PpnK-typ_C"/>
</dbReference>
<dbReference type="InterPro" id="IPR016064">
    <property type="entry name" value="NAD/diacylglycerol_kinase_sf"/>
</dbReference>
<dbReference type="InterPro" id="IPR002504">
    <property type="entry name" value="NADK"/>
</dbReference>
<dbReference type="NCBIfam" id="NF003424">
    <property type="entry name" value="PRK04885.1"/>
    <property type="match status" value="1"/>
</dbReference>
<dbReference type="PANTHER" id="PTHR20275">
    <property type="entry name" value="NAD KINASE"/>
    <property type="match status" value="1"/>
</dbReference>
<dbReference type="PANTHER" id="PTHR20275:SF0">
    <property type="entry name" value="NAD KINASE"/>
    <property type="match status" value="1"/>
</dbReference>
<dbReference type="Pfam" id="PF01513">
    <property type="entry name" value="NAD_kinase"/>
    <property type="match status" value="1"/>
</dbReference>
<dbReference type="Pfam" id="PF20143">
    <property type="entry name" value="NAD_kinase_C"/>
    <property type="match status" value="1"/>
</dbReference>
<dbReference type="SUPFAM" id="SSF111331">
    <property type="entry name" value="NAD kinase/diacylglycerol kinase-like"/>
    <property type="match status" value="1"/>
</dbReference>
<reference key="1">
    <citation type="journal article" date="2008" name="J. Bacteriol.">
        <title>Genome sequence of Staphylococcus aureus strain Newman and comparative analysis of staphylococcal genomes: polymorphism and evolution of two major pathogenicity islands.</title>
        <authorList>
            <person name="Baba T."/>
            <person name="Bae T."/>
            <person name="Schneewind O."/>
            <person name="Takeuchi F."/>
            <person name="Hiramatsu K."/>
        </authorList>
    </citation>
    <scope>NUCLEOTIDE SEQUENCE [LARGE SCALE GENOMIC DNA]</scope>
    <source>
        <strain>Newman</strain>
    </source>
</reference>
<comment type="function">
    <text evidence="1">Involved in the regulation of the intracellular balance of NAD and NADP, and is a key enzyme in the biosynthesis of NADP. Catalyzes specifically the phosphorylation on 2'-hydroxyl of the adenosine moiety of NAD to yield NADP.</text>
</comment>
<comment type="catalytic activity">
    <reaction evidence="1">
        <text>NAD(+) + ATP = ADP + NADP(+) + H(+)</text>
        <dbReference type="Rhea" id="RHEA:18629"/>
        <dbReference type="ChEBI" id="CHEBI:15378"/>
        <dbReference type="ChEBI" id="CHEBI:30616"/>
        <dbReference type="ChEBI" id="CHEBI:57540"/>
        <dbReference type="ChEBI" id="CHEBI:58349"/>
        <dbReference type="ChEBI" id="CHEBI:456216"/>
        <dbReference type="EC" id="2.7.1.23"/>
    </reaction>
</comment>
<comment type="cofactor">
    <cofactor evidence="1">
        <name>a divalent metal cation</name>
        <dbReference type="ChEBI" id="CHEBI:60240"/>
    </cofactor>
</comment>
<comment type="subcellular location">
    <subcellularLocation>
        <location evidence="1">Cytoplasm</location>
    </subcellularLocation>
</comment>
<comment type="similarity">
    <text evidence="1">Belongs to the NAD kinase family.</text>
</comment>
<sequence length="269" mass="30769">MRYTILTKGDSKSNALKHKMMNYMKDFRMIEDSENPEIVISVGGDGTLLQAFHQYSHMLSKVAFVGVHTGHLGFYADWLPHEVEKLIIEINNSEFQVIEYPLLEIIMRYNDNGYETRYLALNEATMKTENGSTLVVDVNLRGKHFERFRGDGLCVSTPSGSTAYNKALGGALIHPSLEAMQITEIASINNRVFRTVGSPLVLPKHHTCLISPVNHDTIRMTIDHVSIKHKNVNSIQYRVANEKVRFARFRPFPFWKRVHDSFISSDEER</sequence>
<name>NADK_STAAE</name>